<name>CC130_CAEEL</name>
<keyword id="KW-1185">Reference proteome</keyword>
<dbReference type="EMBL" id="Z47358">
    <property type="protein sequence ID" value="CAA87435.1"/>
    <property type="molecule type" value="Genomic_DNA"/>
</dbReference>
<dbReference type="PIR" id="T27732">
    <property type="entry name" value="T27732"/>
</dbReference>
<dbReference type="RefSeq" id="NP_496077.1">
    <property type="nucleotide sequence ID" value="NM_063676.7"/>
</dbReference>
<dbReference type="SMR" id="Q09651"/>
<dbReference type="BioGRID" id="39841">
    <property type="interactions" value="4"/>
</dbReference>
<dbReference type="DIP" id="DIP-24831N"/>
<dbReference type="FunCoup" id="Q09651">
    <property type="interactions" value="2477"/>
</dbReference>
<dbReference type="IntAct" id="Q09651">
    <property type="interactions" value="4"/>
</dbReference>
<dbReference type="STRING" id="6239.ZK1307.9.1"/>
<dbReference type="PaxDb" id="6239-ZK1307.9"/>
<dbReference type="EnsemblMetazoa" id="ZK1307.9.1">
    <property type="protein sequence ID" value="ZK1307.9.1"/>
    <property type="gene ID" value="WBGene00014250"/>
</dbReference>
<dbReference type="GeneID" id="174518"/>
<dbReference type="KEGG" id="cel:CELE_ZK1307.9"/>
<dbReference type="UCSC" id="ZK1307.9">
    <property type="organism name" value="c. elegans"/>
</dbReference>
<dbReference type="AGR" id="WB:WBGene00014250"/>
<dbReference type="CTD" id="174518"/>
<dbReference type="WormBase" id="ZK1307.9">
    <property type="protein sequence ID" value="CE01697"/>
    <property type="gene ID" value="WBGene00014250"/>
</dbReference>
<dbReference type="eggNOG" id="KOG2990">
    <property type="taxonomic scope" value="Eukaryota"/>
</dbReference>
<dbReference type="GeneTree" id="ENSGT00530000063615"/>
<dbReference type="HOGENOM" id="CLU_050402_3_1_1"/>
<dbReference type="InParanoid" id="Q09651"/>
<dbReference type="OMA" id="WELIWPA"/>
<dbReference type="OrthoDB" id="360327at2759"/>
<dbReference type="PhylomeDB" id="Q09651"/>
<dbReference type="PRO" id="PR:Q09651"/>
<dbReference type="Proteomes" id="UP000001940">
    <property type="component" value="Chromosome II"/>
</dbReference>
<dbReference type="Bgee" id="WBGene00014250">
    <property type="expression patterns" value="Expressed in germ line (C elegans) and 4 other cell types or tissues"/>
</dbReference>
<dbReference type="GO" id="GO:0071014">
    <property type="term" value="C:post-mRNA release spliceosomal complex"/>
    <property type="evidence" value="ECO:0000318"/>
    <property type="project" value="GO_Central"/>
</dbReference>
<dbReference type="GO" id="GO:0005684">
    <property type="term" value="C:U2-type spliceosomal complex"/>
    <property type="evidence" value="ECO:0000318"/>
    <property type="project" value="GO_Central"/>
</dbReference>
<dbReference type="GO" id="GO:0000398">
    <property type="term" value="P:mRNA splicing, via spliceosome"/>
    <property type="evidence" value="ECO:0007669"/>
    <property type="project" value="InterPro"/>
</dbReference>
<dbReference type="GO" id="GO:0008380">
    <property type="term" value="P:RNA splicing"/>
    <property type="evidence" value="ECO:0000318"/>
    <property type="project" value="GO_Central"/>
</dbReference>
<dbReference type="InterPro" id="IPR007590">
    <property type="entry name" value="Saf4/Yju2"/>
</dbReference>
<dbReference type="PANTHER" id="PTHR12111">
    <property type="entry name" value="SPLICING FACTOR YJU2"/>
    <property type="match status" value="1"/>
</dbReference>
<dbReference type="PANTHER" id="PTHR12111:SF2">
    <property type="entry name" value="SPLICING FACTOR YJU2B-RELATED"/>
    <property type="match status" value="1"/>
</dbReference>
<dbReference type="Pfam" id="PF04502">
    <property type="entry name" value="Saf4_Yju2"/>
    <property type="match status" value="1"/>
</dbReference>
<organism>
    <name type="scientific">Caenorhabditis elegans</name>
    <dbReference type="NCBI Taxonomy" id="6239"/>
    <lineage>
        <taxon>Eukaryota</taxon>
        <taxon>Metazoa</taxon>
        <taxon>Ecdysozoa</taxon>
        <taxon>Nematoda</taxon>
        <taxon>Chromadorea</taxon>
        <taxon>Rhabditida</taxon>
        <taxon>Rhabditina</taxon>
        <taxon>Rhabditomorpha</taxon>
        <taxon>Rhabditoidea</taxon>
        <taxon>Rhabditidae</taxon>
        <taxon>Peloderinae</taxon>
        <taxon>Caenorhabditis</taxon>
    </lineage>
</organism>
<accession>Q09651</accession>
<feature type="chain" id="PRO_0000065571" description="Coiled-coil domain-containing protein 130 homolog">
    <location>
        <begin position="1"/>
        <end position="369"/>
    </location>
</feature>
<feature type="region of interest" description="Disordered" evidence="1">
    <location>
        <begin position="233"/>
        <end position="369"/>
    </location>
</feature>
<feature type="compositionally biased region" description="Basic and acidic residues" evidence="1">
    <location>
        <begin position="233"/>
        <end position="263"/>
    </location>
</feature>
<feature type="compositionally biased region" description="Low complexity" evidence="1">
    <location>
        <begin position="266"/>
        <end position="282"/>
    </location>
</feature>
<feature type="compositionally biased region" description="Basic and acidic residues" evidence="1">
    <location>
        <begin position="283"/>
        <end position="297"/>
    </location>
</feature>
<feature type="compositionally biased region" description="Low complexity" evidence="1">
    <location>
        <begin position="299"/>
        <end position="310"/>
    </location>
</feature>
<gene>
    <name type="ORF">ZK1307.9</name>
</gene>
<evidence type="ECO:0000256" key="1">
    <source>
        <dbReference type="SAM" id="MobiDB-lite"/>
    </source>
</evidence>
<evidence type="ECO:0000305" key="2"/>
<reference key="1">
    <citation type="journal article" date="1998" name="Science">
        <title>Genome sequence of the nematode C. elegans: a platform for investigating biology.</title>
        <authorList>
            <consortium name="The C. elegans sequencing consortium"/>
        </authorList>
    </citation>
    <scope>NUCLEOTIDE SEQUENCE [LARGE SCALE GENOMIC DNA]</scope>
    <source>
        <strain>Bristol N2</strain>
    </source>
</reference>
<comment type="interaction">
    <interactant intactId="EBI-327687">
        <id>Q09651</id>
    </interactant>
    <interactant intactId="EBI-316352">
        <id>G5EFL5</id>
        <label>alp-1</label>
    </interactant>
    <organismsDiffer>false</organismsDiffer>
    <experiments>3</experiments>
</comment>
<comment type="similarity">
    <text evidence="2">Belongs to the CWC16 family.</text>
</comment>
<proteinExistence type="evidence at protein level"/>
<protein>
    <recommendedName>
        <fullName>Coiled-coil domain-containing protein 130 homolog</fullName>
    </recommendedName>
</protein>
<sequence>MGERKGQNFYYPPDFNYKTHKSLNGYHGTHALRERAKKIDQGILVIRFEMPFNIWCLGCHNHVGMGVRYNAEKKKIGMYYTTPLHEFRMKCHLCDNYYVIRTDPKNFDYELVEGCSRQELRFDPTDIAQIGAVDRGFTQKLAADAMFKKEHEAEDKDKAATEEGRVDKLEWIQERMRDDFTANSFLRAQFRNEKKSLNETRARDANLRDKLSIGTTQLLPETEEDRRIASMMTRYRDTKTHDDHLESSRDRIESRRIFRRPEETDTPSTSSGSSGGAVPSASERLKATMKAERDKRINASFSTAGTSSATQKLLGIKRKSASSLGVQIKKAAPENSSLQDEEPAVEKPNISNPISLIAQEYGNSSDDSD</sequence>